<proteinExistence type="evidence at protein level"/>
<dbReference type="EMBL" id="AB003184">
    <property type="protein sequence ID" value="BAA22848.1"/>
    <property type="molecule type" value="mRNA"/>
</dbReference>
<dbReference type="EMBL" id="AB024536">
    <property type="protein sequence ID" value="BAA85970.1"/>
    <property type="molecule type" value="mRNA"/>
</dbReference>
<dbReference type="EMBL" id="AB024537">
    <property type="protein sequence ID" value="BAA85971.1"/>
    <property type="molecule type" value="Genomic_DNA"/>
</dbReference>
<dbReference type="EMBL" id="AY358871">
    <property type="protein sequence ID" value="AAQ89230.1"/>
    <property type="molecule type" value="mRNA"/>
</dbReference>
<dbReference type="CCDS" id="CCDS10260.1"/>
<dbReference type="RefSeq" id="NP_005536.1">
    <property type="nucleotide sequence ID" value="NM_005545.4"/>
</dbReference>
<dbReference type="RefSeq" id="NP_958934.1">
    <property type="nucleotide sequence ID" value="NM_201526.2"/>
</dbReference>
<dbReference type="SMR" id="O14498"/>
<dbReference type="BioGRID" id="109878">
    <property type="interactions" value="165"/>
</dbReference>
<dbReference type="FunCoup" id="O14498">
    <property type="interactions" value="81"/>
</dbReference>
<dbReference type="IntAct" id="O14498">
    <property type="interactions" value="123"/>
</dbReference>
<dbReference type="MINT" id="O14498"/>
<dbReference type="STRING" id="9606.ENSP00000249842"/>
<dbReference type="GlyConnect" id="1391">
    <property type="glycosylation" value="5 N-Linked glycans (2 sites)"/>
</dbReference>
<dbReference type="GlyCosmos" id="O14498">
    <property type="glycosylation" value="5 sites, 5 glycans"/>
</dbReference>
<dbReference type="GlyGen" id="O14498">
    <property type="glycosylation" value="6 sites, 21 N-linked glycans (3 sites), 1 O-linked glycan (2 sites)"/>
</dbReference>
<dbReference type="iPTMnet" id="O14498"/>
<dbReference type="PhosphoSitePlus" id="O14498"/>
<dbReference type="BioMuta" id="ISLR"/>
<dbReference type="jPOST" id="O14498"/>
<dbReference type="MassIVE" id="O14498"/>
<dbReference type="PaxDb" id="9606-ENSP00000249842"/>
<dbReference type="PeptideAtlas" id="O14498"/>
<dbReference type="ProteomicsDB" id="48044"/>
<dbReference type="Antibodypedia" id="55140">
    <property type="antibodies" value="108 antibodies from 14 providers"/>
</dbReference>
<dbReference type="DNASU" id="3671"/>
<dbReference type="Ensembl" id="ENST00000249842.8">
    <property type="protein sequence ID" value="ENSP00000249842.3"/>
    <property type="gene ID" value="ENSG00000129009.13"/>
</dbReference>
<dbReference type="Ensembl" id="ENST00000395118.1">
    <property type="protein sequence ID" value="ENSP00000378550.1"/>
    <property type="gene ID" value="ENSG00000129009.13"/>
</dbReference>
<dbReference type="Ensembl" id="ENST00000671810.1">
    <property type="protein sequence ID" value="ENSP00000499984.1"/>
    <property type="gene ID" value="ENSG00000288508.1"/>
</dbReference>
<dbReference type="Ensembl" id="ENST00000672683.1">
    <property type="protein sequence ID" value="ENSP00000500029.1"/>
    <property type="gene ID" value="ENSG00000288508.1"/>
</dbReference>
<dbReference type="GeneID" id="3671"/>
<dbReference type="KEGG" id="hsa:3671"/>
<dbReference type="MANE-Select" id="ENST00000249842.8">
    <property type="protein sequence ID" value="ENSP00000249842.3"/>
    <property type="RefSeq nucleotide sequence ID" value="NM_005545.4"/>
    <property type="RefSeq protein sequence ID" value="NP_005536.1"/>
</dbReference>
<dbReference type="UCSC" id="uc002axg.2">
    <property type="organism name" value="human"/>
</dbReference>
<dbReference type="AGR" id="HGNC:6133"/>
<dbReference type="CTD" id="3671"/>
<dbReference type="DisGeNET" id="3671"/>
<dbReference type="GeneCards" id="ISLR"/>
<dbReference type="HGNC" id="HGNC:6133">
    <property type="gene designation" value="ISLR"/>
</dbReference>
<dbReference type="HPA" id="ENSG00000129009">
    <property type="expression patterns" value="Tissue enhanced (cervix)"/>
</dbReference>
<dbReference type="MIM" id="602059">
    <property type="type" value="gene"/>
</dbReference>
<dbReference type="neXtProt" id="NX_O14498"/>
<dbReference type="OpenTargets" id="ENSG00000129009"/>
<dbReference type="PharmGKB" id="PA29933"/>
<dbReference type="VEuPathDB" id="HostDB:ENSG00000129009"/>
<dbReference type="eggNOG" id="KOG0619">
    <property type="taxonomic scope" value="Eukaryota"/>
</dbReference>
<dbReference type="GeneTree" id="ENSGT00940000160967"/>
<dbReference type="HOGENOM" id="CLU_658828_0_0_1"/>
<dbReference type="InParanoid" id="O14498"/>
<dbReference type="OMA" id="AHNEIRV"/>
<dbReference type="OrthoDB" id="2151624at2759"/>
<dbReference type="PAN-GO" id="O14498">
    <property type="GO annotations" value="0 GO annotations based on evolutionary models"/>
</dbReference>
<dbReference type="PhylomeDB" id="O14498"/>
<dbReference type="TreeFam" id="TF351112"/>
<dbReference type="PathwayCommons" id="O14498"/>
<dbReference type="Reactome" id="R-HSA-114608">
    <property type="pathway name" value="Platelet degranulation"/>
</dbReference>
<dbReference type="SignaLink" id="O14498"/>
<dbReference type="BioGRID-ORCS" id="3671">
    <property type="hits" value="12 hits in 1134 CRISPR screens"/>
</dbReference>
<dbReference type="ChiTaRS" id="ISLR">
    <property type="organism name" value="human"/>
</dbReference>
<dbReference type="GenomeRNAi" id="3671"/>
<dbReference type="Pharos" id="O14498">
    <property type="development level" value="Tbio"/>
</dbReference>
<dbReference type="PRO" id="PR:O14498"/>
<dbReference type="Proteomes" id="UP000005640">
    <property type="component" value="Chromosome 15"/>
</dbReference>
<dbReference type="RNAct" id="O14498">
    <property type="molecule type" value="protein"/>
</dbReference>
<dbReference type="Bgee" id="ENSG00000129009">
    <property type="expression patterns" value="Expressed in calcaneal tendon and 103 other cell types or tissues"/>
</dbReference>
<dbReference type="ExpressionAtlas" id="O14498">
    <property type="expression patterns" value="baseline and differential"/>
</dbReference>
<dbReference type="GO" id="GO:0070062">
    <property type="term" value="C:extracellular exosome"/>
    <property type="evidence" value="ECO:0007005"/>
    <property type="project" value="UniProtKB"/>
</dbReference>
<dbReference type="GO" id="GO:0005576">
    <property type="term" value="C:extracellular region"/>
    <property type="evidence" value="ECO:0000304"/>
    <property type="project" value="Reactome"/>
</dbReference>
<dbReference type="GO" id="GO:0031093">
    <property type="term" value="C:platelet alpha granule lumen"/>
    <property type="evidence" value="ECO:0000304"/>
    <property type="project" value="Reactome"/>
</dbReference>
<dbReference type="GO" id="GO:0007155">
    <property type="term" value="P:cell adhesion"/>
    <property type="evidence" value="ECO:0000304"/>
    <property type="project" value="ProtInc"/>
</dbReference>
<dbReference type="FunFam" id="2.60.40.10:FF:001692">
    <property type="entry name" value="Immunoglobulin superfamily containing leucine-rich repeat protein"/>
    <property type="match status" value="1"/>
</dbReference>
<dbReference type="FunFam" id="3.80.10.10:FF:000058">
    <property type="entry name" value="immunoglobulin superfamily containing leucine-rich repeat protein 2"/>
    <property type="match status" value="1"/>
</dbReference>
<dbReference type="Gene3D" id="2.60.40.10">
    <property type="entry name" value="Immunoglobulins"/>
    <property type="match status" value="1"/>
</dbReference>
<dbReference type="Gene3D" id="3.80.10.10">
    <property type="entry name" value="Ribonuclease Inhibitor"/>
    <property type="match status" value="1"/>
</dbReference>
<dbReference type="InterPro" id="IPR000483">
    <property type="entry name" value="Cys-rich_flank_reg_C"/>
</dbReference>
<dbReference type="InterPro" id="IPR007110">
    <property type="entry name" value="Ig-like_dom"/>
</dbReference>
<dbReference type="InterPro" id="IPR036179">
    <property type="entry name" value="Ig-like_dom_sf"/>
</dbReference>
<dbReference type="InterPro" id="IPR013783">
    <property type="entry name" value="Ig-like_fold"/>
</dbReference>
<dbReference type="InterPro" id="IPR003598">
    <property type="entry name" value="Ig_sub2"/>
</dbReference>
<dbReference type="InterPro" id="IPR001611">
    <property type="entry name" value="Leu-rich_rpt"/>
</dbReference>
<dbReference type="InterPro" id="IPR003591">
    <property type="entry name" value="Leu-rich_rpt_typical-subtyp"/>
</dbReference>
<dbReference type="InterPro" id="IPR032675">
    <property type="entry name" value="LRR_dom_sf"/>
</dbReference>
<dbReference type="PANTHER" id="PTHR24366">
    <property type="entry name" value="IG(IMMUNOGLOBULIN) AND LRR(LEUCINE RICH REPEAT) DOMAINS"/>
    <property type="match status" value="1"/>
</dbReference>
<dbReference type="PANTHER" id="PTHR24366:SF14">
    <property type="entry name" value="IMMUNOGLOBULIN SUPERFAMILY CONTAINING LEUCINE-RICH REPEAT PROTEIN"/>
    <property type="match status" value="1"/>
</dbReference>
<dbReference type="Pfam" id="PF13855">
    <property type="entry name" value="LRR_8"/>
    <property type="match status" value="2"/>
</dbReference>
<dbReference type="SMART" id="SM00408">
    <property type="entry name" value="IGc2"/>
    <property type="match status" value="1"/>
</dbReference>
<dbReference type="SMART" id="SM00369">
    <property type="entry name" value="LRR_TYP"/>
    <property type="match status" value="5"/>
</dbReference>
<dbReference type="SMART" id="SM00082">
    <property type="entry name" value="LRRCT"/>
    <property type="match status" value="1"/>
</dbReference>
<dbReference type="SUPFAM" id="SSF48726">
    <property type="entry name" value="Immunoglobulin"/>
    <property type="match status" value="1"/>
</dbReference>
<dbReference type="SUPFAM" id="SSF52058">
    <property type="entry name" value="L domain-like"/>
    <property type="match status" value="1"/>
</dbReference>
<dbReference type="PROSITE" id="PS50835">
    <property type="entry name" value="IG_LIKE"/>
    <property type="match status" value="1"/>
</dbReference>
<dbReference type="PROSITE" id="PS51450">
    <property type="entry name" value="LRR"/>
    <property type="match status" value="5"/>
</dbReference>
<sequence length="428" mass="45997">MQELHLLWWALLLGLAQACPEPCDCGEKYGFQIADCAYRDLESVPPGFPANVTTLSLSANRLPGLPEGAFREVPLLQSLWLAHNEIRTVAAGALASLSHLKSLDLSHNLISDFAWSDLHNLSALQLLKMDSNELTFIPRDAFRSLRALRSLQLNHNRLHTLAEGTFTPLTALSHLQINENPFDCTCGIVWLKTWALTTAVSIPEQDNIACTSPHVLKGTPLSRLPPLPCSAPSVQLSYQPSQDGAELRPGFVLALHCDVDGQPAPQLHWHIQIPSGIVEITSPNVGTDGRALPGTPVASSQPRFQAFANGSLLIPDFGKLEEGTYSCLATNELGSAESSVDVALATPGEGGEDTLGRRFHGKAVEGKGCYTVDNEVQPSGPEDNVVIIYLSRAGNPEAAVAEGVPGQLPPGLLLLGQSLLLFFFLTSF</sequence>
<evidence type="ECO:0000255" key="1"/>
<evidence type="ECO:0000255" key="2">
    <source>
        <dbReference type="PROSITE-ProRule" id="PRU00114"/>
    </source>
</evidence>
<evidence type="ECO:0000269" key="3">
    <source>
    </source>
</evidence>
<evidence type="ECO:0000269" key="4">
    <source>
    </source>
</evidence>
<evidence type="ECO:0000269" key="5">
    <source>
    </source>
</evidence>
<evidence type="ECO:0000305" key="6"/>
<name>ISLR_HUMAN</name>
<feature type="signal peptide" evidence="1">
    <location>
        <begin position="1"/>
        <end position="18"/>
    </location>
</feature>
<feature type="chain" id="PRO_0000312208" description="Immunoglobulin superfamily containing leucine-rich repeat protein">
    <location>
        <begin position="19"/>
        <end position="428"/>
    </location>
</feature>
<feature type="domain" description="LRRNT">
    <location>
        <begin position="19"/>
        <end position="50"/>
    </location>
</feature>
<feature type="repeat" description="LRR 1">
    <location>
        <begin position="51"/>
        <end position="72"/>
    </location>
</feature>
<feature type="repeat" description="LRR 2">
    <location>
        <begin position="75"/>
        <end position="96"/>
    </location>
</feature>
<feature type="repeat" description="LRR 3">
    <location>
        <begin position="99"/>
        <end position="122"/>
    </location>
</feature>
<feature type="repeat" description="LRR 4">
    <location>
        <begin position="123"/>
        <end position="144"/>
    </location>
</feature>
<feature type="repeat" description="LRR 5">
    <location>
        <begin position="147"/>
        <end position="168"/>
    </location>
</feature>
<feature type="domain" description="LRRCT">
    <location>
        <begin position="180"/>
        <end position="231"/>
    </location>
</feature>
<feature type="domain" description="Ig-like">
    <location>
        <begin position="232"/>
        <end position="343"/>
    </location>
</feature>
<feature type="glycosylation site" description="N-linked (GlcNAc...) asparagine" evidence="1">
    <location>
        <position position="51"/>
    </location>
</feature>
<feature type="glycosylation site" description="N-linked (GlcNAc...) asparagine" evidence="1">
    <location>
        <position position="309"/>
    </location>
</feature>
<feature type="disulfide bond" evidence="2">
    <location>
        <begin position="257"/>
        <end position="327"/>
    </location>
</feature>
<feature type="sequence variant" id="VAR_037454" description="In a colorectal cancer sample; somatic mutation; dbSNP:rs376998994." evidence="4">
    <original>D</original>
    <variation>N</variation>
    <location>
        <position position="183"/>
    </location>
</feature>
<organism>
    <name type="scientific">Homo sapiens</name>
    <name type="common">Human</name>
    <dbReference type="NCBI Taxonomy" id="9606"/>
    <lineage>
        <taxon>Eukaryota</taxon>
        <taxon>Metazoa</taxon>
        <taxon>Chordata</taxon>
        <taxon>Craniata</taxon>
        <taxon>Vertebrata</taxon>
        <taxon>Euteleostomi</taxon>
        <taxon>Mammalia</taxon>
        <taxon>Eutheria</taxon>
        <taxon>Euarchontoglires</taxon>
        <taxon>Primates</taxon>
        <taxon>Haplorrhini</taxon>
        <taxon>Catarrhini</taxon>
        <taxon>Hominidae</taxon>
        <taxon>Homo</taxon>
    </lineage>
</organism>
<comment type="subcellular location">
    <subcellularLocation>
        <location evidence="6">Secreted</location>
    </subcellularLocation>
</comment>
<comment type="tissue specificity">
    <text evidence="3 5">Expressed in various tissues including retina, heart, skeletal muscle, prostate, ovary, small intestine, thyroid, adrenal cortex, testis, stomach and spinal cord.</text>
</comment>
<comment type="developmental stage">
    <text evidence="5">Expressed in fetal lung and kidney.</text>
</comment>
<protein>
    <recommendedName>
        <fullName>Immunoglobulin superfamily containing leucine-rich repeat protein</fullName>
    </recommendedName>
</protein>
<gene>
    <name type="primary">ISLR</name>
    <name type="ORF">UNQ189/PRO215</name>
</gene>
<keyword id="KW-1015">Disulfide bond</keyword>
<keyword id="KW-0325">Glycoprotein</keyword>
<keyword id="KW-0393">Immunoglobulin domain</keyword>
<keyword id="KW-0433">Leucine-rich repeat</keyword>
<keyword id="KW-1267">Proteomics identification</keyword>
<keyword id="KW-1185">Reference proteome</keyword>
<keyword id="KW-0677">Repeat</keyword>
<keyword id="KW-0964">Secreted</keyword>
<keyword id="KW-0732">Signal</keyword>
<reference key="1">
    <citation type="journal article" date="1997" name="Genomics">
        <title>Cloning of the cDNA for a new member of the immunoglobulin superfamily (ISLR) containing leucine-rich repeat (LRR).</title>
        <authorList>
            <person name="Nagasawa A."/>
            <person name="Kubota R."/>
            <person name="Imamura Y."/>
            <person name="Nagamine K."/>
            <person name="Wang Y."/>
            <person name="Asakawa S."/>
            <person name="Kudoh J."/>
            <person name="Minoshima S."/>
            <person name="Mashima Y."/>
            <person name="Oguchi Y."/>
            <person name="Shimizu N."/>
        </authorList>
    </citation>
    <scope>NUCLEOTIDE SEQUENCE [MRNA]</scope>
    <scope>TISSUE SPECIFICITY</scope>
    <scope>DEVELOPMENTAL STAGE</scope>
    <source>
        <tissue>Retina</tissue>
    </source>
</reference>
<reference key="2">
    <citation type="journal article" date="1999" name="Genomics">
        <title>Human and mouse ISLR (immunoglobulin superfamily containing leucine-rich repeat) genes: genomic structure and tissue expression.</title>
        <authorList>
            <person name="Nagasawa A."/>
            <person name="Kudoh J."/>
            <person name="Noda S."/>
            <person name="Mashima Y."/>
            <person name="Wright A."/>
            <person name="Oguchi Y."/>
            <person name="Shimizu N."/>
        </authorList>
    </citation>
    <scope>NUCLEOTIDE SEQUENCE [GENOMIC DNA / MRNA]</scope>
    <scope>TISSUE SPECIFICITY</scope>
    <source>
        <tissue>Retina</tissue>
    </source>
</reference>
<reference key="3">
    <citation type="journal article" date="2003" name="Genome Res.">
        <title>The secreted protein discovery initiative (SPDI), a large-scale effort to identify novel human secreted and transmembrane proteins: a bioinformatics assessment.</title>
        <authorList>
            <person name="Clark H.F."/>
            <person name="Gurney A.L."/>
            <person name="Abaya E."/>
            <person name="Baker K."/>
            <person name="Baldwin D.T."/>
            <person name="Brush J."/>
            <person name="Chen J."/>
            <person name="Chow B."/>
            <person name="Chui C."/>
            <person name="Crowley C."/>
            <person name="Currell B."/>
            <person name="Deuel B."/>
            <person name="Dowd P."/>
            <person name="Eaton D."/>
            <person name="Foster J.S."/>
            <person name="Grimaldi C."/>
            <person name="Gu Q."/>
            <person name="Hass P.E."/>
            <person name="Heldens S."/>
            <person name="Huang A."/>
            <person name="Kim H.S."/>
            <person name="Klimowski L."/>
            <person name="Jin Y."/>
            <person name="Johnson S."/>
            <person name="Lee J."/>
            <person name="Lewis L."/>
            <person name="Liao D."/>
            <person name="Mark M.R."/>
            <person name="Robbie E."/>
            <person name="Sanchez C."/>
            <person name="Schoenfeld J."/>
            <person name="Seshagiri S."/>
            <person name="Simmons L."/>
            <person name="Singh J."/>
            <person name="Smith V."/>
            <person name="Stinson J."/>
            <person name="Vagts A."/>
            <person name="Vandlen R.L."/>
            <person name="Watanabe C."/>
            <person name="Wieand D."/>
            <person name="Woods K."/>
            <person name="Xie M.-H."/>
            <person name="Yansura D.G."/>
            <person name="Yi S."/>
            <person name="Yu G."/>
            <person name="Yuan J."/>
            <person name="Zhang M."/>
            <person name="Zhang Z."/>
            <person name="Goddard A.D."/>
            <person name="Wood W.I."/>
            <person name="Godowski P.J."/>
            <person name="Gray A.M."/>
        </authorList>
    </citation>
    <scope>NUCLEOTIDE SEQUENCE [LARGE SCALE MRNA]</scope>
</reference>
<reference key="4">
    <citation type="journal article" date="2006" name="Science">
        <title>The consensus coding sequences of human breast and colorectal cancers.</title>
        <authorList>
            <person name="Sjoeblom T."/>
            <person name="Jones S."/>
            <person name="Wood L.D."/>
            <person name="Parsons D.W."/>
            <person name="Lin J."/>
            <person name="Barber T.D."/>
            <person name="Mandelker D."/>
            <person name="Leary R.J."/>
            <person name="Ptak J."/>
            <person name="Silliman N."/>
            <person name="Szabo S."/>
            <person name="Buckhaults P."/>
            <person name="Farrell C."/>
            <person name="Meeh P."/>
            <person name="Markowitz S.D."/>
            <person name="Willis J."/>
            <person name="Dawson D."/>
            <person name="Willson J.K.V."/>
            <person name="Gazdar A.F."/>
            <person name="Hartigan J."/>
            <person name="Wu L."/>
            <person name="Liu C."/>
            <person name="Parmigiani G."/>
            <person name="Park B.H."/>
            <person name="Bachman K.E."/>
            <person name="Papadopoulos N."/>
            <person name="Vogelstein B."/>
            <person name="Kinzler K.W."/>
            <person name="Velculescu V.E."/>
        </authorList>
    </citation>
    <scope>VARIANT [LARGE SCALE ANALYSIS] ASN-183</scope>
</reference>
<accession>O14498</accession>